<name>RL24_BREDI</name>
<sequence length="15" mass="1513">AAKIKKGDNVVVLTG</sequence>
<organism>
    <name type="scientific">Brevundimonas diminuta</name>
    <name type="common">Pseudomonas diminuta</name>
    <dbReference type="NCBI Taxonomy" id="293"/>
    <lineage>
        <taxon>Bacteria</taxon>
        <taxon>Pseudomonadati</taxon>
        <taxon>Pseudomonadota</taxon>
        <taxon>Alphaproteobacteria</taxon>
        <taxon>Caulobacterales</taxon>
        <taxon>Caulobacteraceae</taxon>
        <taxon>Brevundimonas</taxon>
    </lineage>
</organism>
<proteinExistence type="evidence at protein level"/>
<protein>
    <recommendedName>
        <fullName evidence="2">Large ribosomal subunit protein uL24</fullName>
    </recommendedName>
    <alternativeName>
        <fullName>50S ribosomal protein L24</fullName>
    </alternativeName>
</protein>
<keyword id="KW-0903">Direct protein sequencing</keyword>
<keyword id="KW-0687">Ribonucleoprotein</keyword>
<keyword id="KW-0689">Ribosomal protein</keyword>
<keyword id="KW-0694">RNA-binding</keyword>
<keyword id="KW-0699">rRNA-binding</keyword>
<reference key="1">
    <citation type="journal article" date="1995" name="Int. J. Syst. Bacteriol.">
        <title>Comparative ribosomal protein sequence analyses of a phylogenetically defined genus, Pseudomonas, and its relatives.</title>
        <authorList>
            <person name="Ochi K."/>
        </authorList>
    </citation>
    <scope>PROTEIN SEQUENCE</scope>
    <source>
        <strain>ATCC 11568 / DSM 7234 / JCM 2788 / NCIB 9393 / NCTC 8545</strain>
    </source>
</reference>
<evidence type="ECO:0000250" key="1"/>
<evidence type="ECO:0000305" key="2"/>
<dbReference type="GO" id="GO:1990904">
    <property type="term" value="C:ribonucleoprotein complex"/>
    <property type="evidence" value="ECO:0007669"/>
    <property type="project" value="UniProtKB-KW"/>
</dbReference>
<dbReference type="GO" id="GO:0005840">
    <property type="term" value="C:ribosome"/>
    <property type="evidence" value="ECO:0007669"/>
    <property type="project" value="UniProtKB-KW"/>
</dbReference>
<dbReference type="GO" id="GO:0019843">
    <property type="term" value="F:rRNA binding"/>
    <property type="evidence" value="ECO:0007669"/>
    <property type="project" value="UniProtKB-KW"/>
</dbReference>
<comment type="function">
    <text evidence="1">One of two assembly initiator proteins, it binds directly to the 5'-end of the 23S rRNA, where it nucleates assembly of the 50S subunit.</text>
</comment>
<comment type="function">
    <text evidence="1">One of the proteins that surrounds the polypeptide exit tunnel on the outside of the subunit.</text>
</comment>
<comment type="subunit">
    <text evidence="1">Part of the 50S ribosomal subunit.</text>
</comment>
<comment type="similarity">
    <text evidence="2">Belongs to the universal ribosomal protein uL24 family.</text>
</comment>
<accession>Q9R4P5</accession>
<feature type="chain" id="PRO_0000223999" description="Large ribosomal subunit protein uL24">
    <location>
        <begin position="1"/>
        <end position="15" status="greater than"/>
    </location>
</feature>
<feature type="non-terminal residue">
    <location>
        <position position="15"/>
    </location>
</feature>
<gene>
    <name type="primary">rplX</name>
</gene>